<reference key="1">
    <citation type="submission" date="2005-08" db="EMBL/GenBank/DDBJ databases">
        <title>Complete sequence of Pelodictyon luteolum DSM 273.</title>
        <authorList>
            <consortium name="US DOE Joint Genome Institute"/>
            <person name="Copeland A."/>
            <person name="Lucas S."/>
            <person name="Lapidus A."/>
            <person name="Barry K."/>
            <person name="Detter J.C."/>
            <person name="Glavina T."/>
            <person name="Hammon N."/>
            <person name="Israni S."/>
            <person name="Pitluck S."/>
            <person name="Bryant D."/>
            <person name="Schmutz J."/>
            <person name="Larimer F."/>
            <person name="Land M."/>
            <person name="Kyrpides N."/>
            <person name="Ivanova N."/>
            <person name="Richardson P."/>
        </authorList>
    </citation>
    <scope>NUCLEOTIDE SEQUENCE [LARGE SCALE GENOMIC DNA]</scope>
    <source>
        <strain>DSM 273 / BCRC 81028 / 2530</strain>
    </source>
</reference>
<gene>
    <name evidence="1" type="primary">rplU</name>
    <name type="ordered locus">Plut_1508</name>
</gene>
<organism>
    <name type="scientific">Chlorobium luteolum (strain DSM 273 / BCRC 81028 / 2530)</name>
    <name type="common">Pelodictyon luteolum</name>
    <dbReference type="NCBI Taxonomy" id="319225"/>
    <lineage>
        <taxon>Bacteria</taxon>
        <taxon>Pseudomonadati</taxon>
        <taxon>Chlorobiota</taxon>
        <taxon>Chlorobiia</taxon>
        <taxon>Chlorobiales</taxon>
        <taxon>Chlorobiaceae</taxon>
        <taxon>Chlorobium/Pelodictyon group</taxon>
        <taxon>Pelodictyon</taxon>
    </lineage>
</organism>
<proteinExistence type="inferred from homology"/>
<accession>Q3B2R6</accession>
<keyword id="KW-1185">Reference proteome</keyword>
<keyword id="KW-0687">Ribonucleoprotein</keyword>
<keyword id="KW-0689">Ribosomal protein</keyword>
<keyword id="KW-0694">RNA-binding</keyword>
<keyword id="KW-0699">rRNA-binding</keyword>
<sequence>MQALIEISDKQYLVKKGDTLFVPRQQTAIGDTMEISSMATIDGANTVLNPAVSVKAKVLGHVKDDKVVVFKKKRRKRYQSRNGHRQQMTQIEVVSL</sequence>
<protein>
    <recommendedName>
        <fullName evidence="1">Large ribosomal subunit protein bL21</fullName>
    </recommendedName>
    <alternativeName>
        <fullName evidence="3">50S ribosomal protein L21</fullName>
    </alternativeName>
</protein>
<dbReference type="EMBL" id="CP000096">
    <property type="protein sequence ID" value="ABB24365.1"/>
    <property type="status" value="ALT_INIT"/>
    <property type="molecule type" value="Genomic_DNA"/>
</dbReference>
<dbReference type="RefSeq" id="WP_011358237.1">
    <property type="nucleotide sequence ID" value="NC_007512.1"/>
</dbReference>
<dbReference type="SMR" id="Q3B2R6"/>
<dbReference type="STRING" id="319225.Plut_1508"/>
<dbReference type="KEGG" id="plt:Plut_1508"/>
<dbReference type="eggNOG" id="COG0261">
    <property type="taxonomic scope" value="Bacteria"/>
</dbReference>
<dbReference type="HOGENOM" id="CLU_061463_3_2_10"/>
<dbReference type="OrthoDB" id="9813334at2"/>
<dbReference type="Proteomes" id="UP000002709">
    <property type="component" value="Chromosome"/>
</dbReference>
<dbReference type="GO" id="GO:0005737">
    <property type="term" value="C:cytoplasm"/>
    <property type="evidence" value="ECO:0007669"/>
    <property type="project" value="UniProtKB-ARBA"/>
</dbReference>
<dbReference type="GO" id="GO:1990904">
    <property type="term" value="C:ribonucleoprotein complex"/>
    <property type="evidence" value="ECO:0007669"/>
    <property type="project" value="UniProtKB-KW"/>
</dbReference>
<dbReference type="GO" id="GO:0005840">
    <property type="term" value="C:ribosome"/>
    <property type="evidence" value="ECO:0007669"/>
    <property type="project" value="UniProtKB-KW"/>
</dbReference>
<dbReference type="GO" id="GO:0019843">
    <property type="term" value="F:rRNA binding"/>
    <property type="evidence" value="ECO:0007669"/>
    <property type="project" value="UniProtKB-UniRule"/>
</dbReference>
<dbReference type="GO" id="GO:0003735">
    <property type="term" value="F:structural constituent of ribosome"/>
    <property type="evidence" value="ECO:0007669"/>
    <property type="project" value="InterPro"/>
</dbReference>
<dbReference type="GO" id="GO:0006412">
    <property type="term" value="P:translation"/>
    <property type="evidence" value="ECO:0007669"/>
    <property type="project" value="UniProtKB-UniRule"/>
</dbReference>
<dbReference type="HAMAP" id="MF_01363">
    <property type="entry name" value="Ribosomal_bL21"/>
    <property type="match status" value="1"/>
</dbReference>
<dbReference type="InterPro" id="IPR028909">
    <property type="entry name" value="bL21-like"/>
</dbReference>
<dbReference type="InterPro" id="IPR036164">
    <property type="entry name" value="bL21-like_sf"/>
</dbReference>
<dbReference type="InterPro" id="IPR001787">
    <property type="entry name" value="Ribosomal_bL21"/>
</dbReference>
<dbReference type="InterPro" id="IPR018258">
    <property type="entry name" value="Ribosomal_bL21_CS"/>
</dbReference>
<dbReference type="NCBIfam" id="TIGR00061">
    <property type="entry name" value="L21"/>
    <property type="match status" value="1"/>
</dbReference>
<dbReference type="PANTHER" id="PTHR21349">
    <property type="entry name" value="50S RIBOSOMAL PROTEIN L21"/>
    <property type="match status" value="1"/>
</dbReference>
<dbReference type="PANTHER" id="PTHR21349:SF0">
    <property type="entry name" value="LARGE RIBOSOMAL SUBUNIT PROTEIN BL21M"/>
    <property type="match status" value="1"/>
</dbReference>
<dbReference type="Pfam" id="PF00829">
    <property type="entry name" value="Ribosomal_L21p"/>
    <property type="match status" value="1"/>
</dbReference>
<dbReference type="SUPFAM" id="SSF141091">
    <property type="entry name" value="L21p-like"/>
    <property type="match status" value="1"/>
</dbReference>
<dbReference type="PROSITE" id="PS01169">
    <property type="entry name" value="RIBOSOMAL_L21"/>
    <property type="match status" value="1"/>
</dbReference>
<evidence type="ECO:0000255" key="1">
    <source>
        <dbReference type="HAMAP-Rule" id="MF_01363"/>
    </source>
</evidence>
<evidence type="ECO:0000256" key="2">
    <source>
        <dbReference type="SAM" id="MobiDB-lite"/>
    </source>
</evidence>
<evidence type="ECO:0000305" key="3"/>
<name>RL21_CHLL3</name>
<comment type="function">
    <text evidence="1">This protein binds to 23S rRNA in the presence of protein L20.</text>
</comment>
<comment type="subunit">
    <text evidence="1">Part of the 50S ribosomal subunit. Contacts protein L20.</text>
</comment>
<comment type="similarity">
    <text evidence="1">Belongs to the bacterial ribosomal protein bL21 family.</text>
</comment>
<comment type="sequence caution" evidence="3">
    <conflict type="erroneous initiation">
        <sequence resource="EMBL-CDS" id="ABB24365"/>
    </conflict>
</comment>
<feature type="chain" id="PRO_0000270704" description="Large ribosomal subunit protein bL21">
    <location>
        <begin position="1"/>
        <end position="96"/>
    </location>
</feature>
<feature type="region of interest" description="Disordered" evidence="2">
    <location>
        <begin position="73"/>
        <end position="96"/>
    </location>
</feature>
<feature type="compositionally biased region" description="Basic residues" evidence="2">
    <location>
        <begin position="73"/>
        <end position="84"/>
    </location>
</feature>
<feature type="compositionally biased region" description="Polar residues" evidence="2">
    <location>
        <begin position="85"/>
        <end position="96"/>
    </location>
</feature>